<sequence>MKITPIAFESLGVRSQATLIETKDLRVLVDPAISLAPRRYNLPPHQREVDRLTELAKVLVDVAKDVDVIIVSHYHYDHHDPGYVIPTDIYKNKLVFIKDPQNMINNSQKYRRAPRFLRSIKDKPSKIEIADGKTFEVGHTTISFSPAVPHGADERLGYVIQVAISDKDSTVIFTSDIEGAPKDVHLKFTKEKMPKTIIIDGPLSYLLGRVLKEEELEKSIRNMEEIVKNGLETVIIDHHVLRDINYAEVLKPVYDIAKDLGVRVTTAAEYLNLEPLILEARRKELFKEDNRPARLPRGLANLLSAGEG</sequence>
<proteinExistence type="inferred from homology"/>
<evidence type="ECO:0000255" key="1">
    <source>
        <dbReference type="HAMAP-Rule" id="MF_01406"/>
    </source>
</evidence>
<accession>C3MRR3</accession>
<dbReference type="EMBL" id="CP001400">
    <property type="protein sequence ID" value="ACP38856.1"/>
    <property type="molecule type" value="Genomic_DNA"/>
</dbReference>
<dbReference type="RefSeq" id="WP_012712082.1">
    <property type="nucleotide sequence ID" value="NC_012588.1"/>
</dbReference>
<dbReference type="KEGG" id="sia:M1425_2116"/>
<dbReference type="HOGENOM" id="CLU_079268_0_0_2"/>
<dbReference type="Proteomes" id="UP000001350">
    <property type="component" value="Chromosome"/>
</dbReference>
<dbReference type="Gene3D" id="3.60.15.10">
    <property type="entry name" value="Ribonuclease Z/Hydroxyacylglutathione hydrolase-like"/>
    <property type="match status" value="1"/>
</dbReference>
<dbReference type="HAMAP" id="MF_01406">
    <property type="entry name" value="UPF0282"/>
    <property type="match status" value="1"/>
</dbReference>
<dbReference type="InterPro" id="IPR001279">
    <property type="entry name" value="Metallo-B-lactamas"/>
</dbReference>
<dbReference type="InterPro" id="IPR036866">
    <property type="entry name" value="RibonucZ/Hydroxyglut_hydro"/>
</dbReference>
<dbReference type="InterPro" id="IPR050114">
    <property type="entry name" value="UPF0173_UPF0282_UlaG_hydrolase"/>
</dbReference>
<dbReference type="InterPro" id="IPR014426">
    <property type="entry name" value="UPF0282_hydrls"/>
</dbReference>
<dbReference type="NCBIfam" id="NF003287">
    <property type="entry name" value="PRK04286.1-1"/>
    <property type="match status" value="1"/>
</dbReference>
<dbReference type="PANTHER" id="PTHR43546">
    <property type="entry name" value="UPF0173 METAL-DEPENDENT HYDROLASE MJ1163-RELATED"/>
    <property type="match status" value="1"/>
</dbReference>
<dbReference type="PANTHER" id="PTHR43546:SF4">
    <property type="entry name" value="UPF0282 PROTEIN MJ1629"/>
    <property type="match status" value="1"/>
</dbReference>
<dbReference type="Pfam" id="PF12706">
    <property type="entry name" value="Lactamase_B_2"/>
    <property type="match status" value="1"/>
</dbReference>
<dbReference type="PIRSF" id="PIRSF004944">
    <property type="entry name" value="UCP004944_hydrls"/>
    <property type="match status" value="1"/>
</dbReference>
<dbReference type="SUPFAM" id="SSF56281">
    <property type="entry name" value="Metallo-hydrolase/oxidoreductase"/>
    <property type="match status" value="1"/>
</dbReference>
<feature type="chain" id="PRO_1000215207" description="UPF0282 protein M1425_2116">
    <location>
        <begin position="1"/>
        <end position="308"/>
    </location>
</feature>
<comment type="similarity">
    <text evidence="1">Belongs to the UPF0282 family.</text>
</comment>
<reference key="1">
    <citation type="journal article" date="2009" name="Proc. Natl. Acad. Sci. U.S.A.">
        <title>Biogeography of the Sulfolobus islandicus pan-genome.</title>
        <authorList>
            <person name="Reno M.L."/>
            <person name="Held N.L."/>
            <person name="Fields C.J."/>
            <person name="Burke P.V."/>
            <person name="Whitaker R.J."/>
        </authorList>
    </citation>
    <scope>NUCLEOTIDE SEQUENCE [LARGE SCALE GENOMIC DNA]</scope>
    <source>
        <strain>M.14.25 / Kamchatka #1</strain>
    </source>
</reference>
<gene>
    <name type="ordered locus">M1425_2116</name>
</gene>
<name>Y2116_SACI4</name>
<organism>
    <name type="scientific">Saccharolobus islandicus (strain M.14.25 / Kamchatka #1)</name>
    <name type="common">Sulfolobus islandicus</name>
    <dbReference type="NCBI Taxonomy" id="427317"/>
    <lineage>
        <taxon>Archaea</taxon>
        <taxon>Thermoproteota</taxon>
        <taxon>Thermoprotei</taxon>
        <taxon>Sulfolobales</taxon>
        <taxon>Sulfolobaceae</taxon>
        <taxon>Saccharolobus</taxon>
    </lineage>
</organism>
<protein>
    <recommendedName>
        <fullName evidence="1">UPF0282 protein M1425_2116</fullName>
    </recommendedName>
</protein>